<accession>Q1Q993</accession>
<reference key="1">
    <citation type="submission" date="2006-03" db="EMBL/GenBank/DDBJ databases">
        <title>Complete sequence of chromosome of Psychrobacter cryohalolentis K5.</title>
        <authorList>
            <consortium name="US DOE Joint Genome Institute"/>
            <person name="Copeland A."/>
            <person name="Lucas S."/>
            <person name="Lapidus A."/>
            <person name="Barry K."/>
            <person name="Detter J.C."/>
            <person name="Glavina T."/>
            <person name="Hammon N."/>
            <person name="Israni S."/>
            <person name="Dalin E."/>
            <person name="Tice H."/>
            <person name="Pitluck S."/>
            <person name="Brettin T."/>
            <person name="Bruce D."/>
            <person name="Han C."/>
            <person name="Tapia R."/>
            <person name="Sims D.R."/>
            <person name="Gilna P."/>
            <person name="Schmutz J."/>
            <person name="Larimer F."/>
            <person name="Land M."/>
            <person name="Hauser L."/>
            <person name="Kyrpides N."/>
            <person name="Kim E."/>
            <person name="Richardson P."/>
        </authorList>
    </citation>
    <scope>NUCLEOTIDE SEQUENCE [LARGE SCALE GENOMIC DNA]</scope>
    <source>
        <strain>ATCC BAA-1226 / DSM 17306 / VKM B-2378 / K5</strain>
    </source>
</reference>
<comment type="function">
    <text evidence="1">Catalyzes the dephosphorylation of undecaprenyl diphosphate (UPP). Confers resistance to bacitracin.</text>
</comment>
<comment type="catalytic activity">
    <reaction evidence="1">
        <text>di-trans,octa-cis-undecaprenyl diphosphate + H2O = di-trans,octa-cis-undecaprenyl phosphate + phosphate + H(+)</text>
        <dbReference type="Rhea" id="RHEA:28094"/>
        <dbReference type="ChEBI" id="CHEBI:15377"/>
        <dbReference type="ChEBI" id="CHEBI:15378"/>
        <dbReference type="ChEBI" id="CHEBI:43474"/>
        <dbReference type="ChEBI" id="CHEBI:58405"/>
        <dbReference type="ChEBI" id="CHEBI:60392"/>
        <dbReference type="EC" id="3.6.1.27"/>
    </reaction>
</comment>
<comment type="subcellular location">
    <subcellularLocation>
        <location evidence="1">Cell inner membrane</location>
        <topology evidence="1">Multi-pass membrane protein</topology>
    </subcellularLocation>
</comment>
<comment type="miscellaneous">
    <text>Bacitracin is thought to be involved in the inhibition of peptidoglycan synthesis by sequestering undecaprenyl diphosphate, thereby reducing the pool of lipid carrier available.</text>
</comment>
<comment type="similarity">
    <text evidence="1">Belongs to the UppP family.</text>
</comment>
<gene>
    <name evidence="1" type="primary">uppP</name>
    <name type="ordered locus">Pcryo_1983</name>
</gene>
<keyword id="KW-0046">Antibiotic resistance</keyword>
<keyword id="KW-0997">Cell inner membrane</keyword>
<keyword id="KW-1003">Cell membrane</keyword>
<keyword id="KW-0133">Cell shape</keyword>
<keyword id="KW-0961">Cell wall biogenesis/degradation</keyword>
<keyword id="KW-0378">Hydrolase</keyword>
<keyword id="KW-0472">Membrane</keyword>
<keyword id="KW-0573">Peptidoglycan synthesis</keyword>
<keyword id="KW-0812">Transmembrane</keyword>
<keyword id="KW-1133">Transmembrane helix</keyword>
<organism>
    <name type="scientific">Psychrobacter cryohalolentis (strain ATCC BAA-1226 / DSM 17306 / VKM B-2378 / K5)</name>
    <dbReference type="NCBI Taxonomy" id="335284"/>
    <lineage>
        <taxon>Bacteria</taxon>
        <taxon>Pseudomonadati</taxon>
        <taxon>Pseudomonadota</taxon>
        <taxon>Gammaproteobacteria</taxon>
        <taxon>Moraxellales</taxon>
        <taxon>Moraxellaceae</taxon>
        <taxon>Psychrobacter</taxon>
    </lineage>
</organism>
<feature type="chain" id="PRO_0000250250" description="Undecaprenyl-diphosphatase">
    <location>
        <begin position="1"/>
        <end position="280"/>
    </location>
</feature>
<feature type="transmembrane region" description="Helical" evidence="1">
    <location>
        <begin position="3"/>
        <end position="23"/>
    </location>
</feature>
<feature type="transmembrane region" description="Helical" evidence="1">
    <location>
        <begin position="45"/>
        <end position="65"/>
    </location>
</feature>
<feature type="transmembrane region" description="Helical" evidence="1">
    <location>
        <begin position="88"/>
        <end position="108"/>
    </location>
</feature>
<feature type="transmembrane region" description="Helical" evidence="1">
    <location>
        <begin position="115"/>
        <end position="135"/>
    </location>
</feature>
<feature type="transmembrane region" description="Helical" evidence="1">
    <location>
        <begin position="150"/>
        <end position="170"/>
    </location>
</feature>
<feature type="transmembrane region" description="Helical" evidence="1">
    <location>
        <begin position="191"/>
        <end position="211"/>
    </location>
</feature>
<feature type="transmembrane region" description="Helical" evidence="1">
    <location>
        <begin position="225"/>
        <end position="245"/>
    </location>
</feature>
<feature type="transmembrane region" description="Helical" evidence="1">
    <location>
        <begin position="255"/>
        <end position="275"/>
    </location>
</feature>
<evidence type="ECO:0000255" key="1">
    <source>
        <dbReference type="HAMAP-Rule" id="MF_01006"/>
    </source>
</evidence>
<sequence>MDIILLIQAVIMGIVEGITEFLPISSTGYLILSADLMGFWTKEKVDLFVVVVQFGAILAVIYDYWGRLWQALMGLLTGKAEGMSNPRQLGLSLIVATIPVMIVGFTFADEIKAYLFNPIVVAIMLIIGGLLIFYVENRPKAIIAEEAEDVSLKTALMIGLLQCLALIPGTSRSGATIIGALWLGVSRKASAEFSFFLGIPVIIGAALLDFIKHRDVLTSSEDWLVLGIGTVVSFIIALLCIRLLVAWVSRRDFKIFAWLRIITGVLVLIAAWGFGYQMAG</sequence>
<name>UPPP_PSYCK</name>
<dbReference type="EC" id="3.6.1.27" evidence="1"/>
<dbReference type="EMBL" id="CP000323">
    <property type="protein sequence ID" value="ABE75760.1"/>
    <property type="molecule type" value="Genomic_DNA"/>
</dbReference>
<dbReference type="RefSeq" id="WP_011514303.1">
    <property type="nucleotide sequence ID" value="NC_007969.1"/>
</dbReference>
<dbReference type="SMR" id="Q1Q993"/>
<dbReference type="STRING" id="335284.Pcryo_1983"/>
<dbReference type="KEGG" id="pcr:Pcryo_1983"/>
<dbReference type="eggNOG" id="COG1968">
    <property type="taxonomic scope" value="Bacteria"/>
</dbReference>
<dbReference type="HOGENOM" id="CLU_060296_2_0_6"/>
<dbReference type="Proteomes" id="UP000002425">
    <property type="component" value="Chromosome"/>
</dbReference>
<dbReference type="GO" id="GO:0005886">
    <property type="term" value="C:plasma membrane"/>
    <property type="evidence" value="ECO:0007669"/>
    <property type="project" value="UniProtKB-SubCell"/>
</dbReference>
<dbReference type="GO" id="GO:0050380">
    <property type="term" value="F:undecaprenyl-diphosphatase activity"/>
    <property type="evidence" value="ECO:0007669"/>
    <property type="project" value="UniProtKB-UniRule"/>
</dbReference>
<dbReference type="GO" id="GO:0071555">
    <property type="term" value="P:cell wall organization"/>
    <property type="evidence" value="ECO:0007669"/>
    <property type="project" value="UniProtKB-KW"/>
</dbReference>
<dbReference type="GO" id="GO:0009252">
    <property type="term" value="P:peptidoglycan biosynthetic process"/>
    <property type="evidence" value="ECO:0007669"/>
    <property type="project" value="UniProtKB-KW"/>
</dbReference>
<dbReference type="GO" id="GO:0008360">
    <property type="term" value="P:regulation of cell shape"/>
    <property type="evidence" value="ECO:0007669"/>
    <property type="project" value="UniProtKB-KW"/>
</dbReference>
<dbReference type="GO" id="GO:0046677">
    <property type="term" value="P:response to antibiotic"/>
    <property type="evidence" value="ECO:0007669"/>
    <property type="project" value="UniProtKB-UniRule"/>
</dbReference>
<dbReference type="HAMAP" id="MF_01006">
    <property type="entry name" value="Undec_diphosphatase"/>
    <property type="match status" value="1"/>
</dbReference>
<dbReference type="InterPro" id="IPR003824">
    <property type="entry name" value="UppP"/>
</dbReference>
<dbReference type="NCBIfam" id="NF001389">
    <property type="entry name" value="PRK00281.1-2"/>
    <property type="match status" value="1"/>
</dbReference>
<dbReference type="NCBIfam" id="NF001390">
    <property type="entry name" value="PRK00281.1-4"/>
    <property type="match status" value="1"/>
</dbReference>
<dbReference type="NCBIfam" id="TIGR00753">
    <property type="entry name" value="undec_PP_bacA"/>
    <property type="match status" value="1"/>
</dbReference>
<dbReference type="PANTHER" id="PTHR30622">
    <property type="entry name" value="UNDECAPRENYL-DIPHOSPHATASE"/>
    <property type="match status" value="1"/>
</dbReference>
<dbReference type="PANTHER" id="PTHR30622:SF3">
    <property type="entry name" value="UNDECAPRENYL-DIPHOSPHATASE"/>
    <property type="match status" value="1"/>
</dbReference>
<dbReference type="Pfam" id="PF02673">
    <property type="entry name" value="BacA"/>
    <property type="match status" value="1"/>
</dbReference>
<protein>
    <recommendedName>
        <fullName evidence="1">Undecaprenyl-diphosphatase</fullName>
        <ecNumber evidence="1">3.6.1.27</ecNumber>
    </recommendedName>
    <alternativeName>
        <fullName evidence="1">Bacitracin resistance protein</fullName>
    </alternativeName>
    <alternativeName>
        <fullName evidence="1">Undecaprenyl pyrophosphate phosphatase</fullName>
    </alternativeName>
</protein>
<proteinExistence type="inferred from homology"/>